<name>PA21_ECHCO</name>
<comment type="catalytic activity">
    <reaction evidence="2 3">
        <text>a 1,2-diacyl-sn-glycero-3-phosphocholine + H2O = a 1-acyl-sn-glycero-3-phosphocholine + a fatty acid + H(+)</text>
        <dbReference type="Rhea" id="RHEA:15801"/>
        <dbReference type="ChEBI" id="CHEBI:15377"/>
        <dbReference type="ChEBI" id="CHEBI:15378"/>
        <dbReference type="ChEBI" id="CHEBI:28868"/>
        <dbReference type="ChEBI" id="CHEBI:57643"/>
        <dbReference type="ChEBI" id="CHEBI:58168"/>
        <dbReference type="EC" id="3.1.1.4"/>
    </reaction>
</comment>
<comment type="cofactor">
    <cofactor evidence="1">
        <name>Ca(2+)</name>
        <dbReference type="ChEBI" id="CHEBI:29108"/>
    </cofactor>
    <text evidence="1">Binds 1 Ca(2+) ion.</text>
</comment>
<comment type="subcellular location">
    <subcellularLocation>
        <location evidence="1">Secreted</location>
    </subcellularLocation>
</comment>
<comment type="similarity">
    <text evidence="4">Belongs to the phospholipase A2 family. Group II subfamily.</text>
</comment>
<keyword id="KW-0106">Calcium</keyword>
<keyword id="KW-1015">Disulfide bond</keyword>
<keyword id="KW-0378">Hydrolase</keyword>
<keyword id="KW-0442">Lipid degradation</keyword>
<keyword id="KW-0443">Lipid metabolism</keyword>
<keyword id="KW-0479">Metal-binding</keyword>
<keyword id="KW-0964">Secreted</keyword>
<keyword id="KW-0732">Signal</keyword>
<dbReference type="EC" id="3.1.1.4"/>
<dbReference type="EMBL" id="AF253050">
    <property type="protein sequence ID" value="AAK49823.1"/>
    <property type="molecule type" value="Genomic_DNA"/>
</dbReference>
<dbReference type="SMR" id="Q90ZZ9"/>
<dbReference type="GO" id="GO:0005576">
    <property type="term" value="C:extracellular region"/>
    <property type="evidence" value="ECO:0007669"/>
    <property type="project" value="UniProtKB-SubCell"/>
</dbReference>
<dbReference type="GO" id="GO:0005509">
    <property type="term" value="F:calcium ion binding"/>
    <property type="evidence" value="ECO:0007669"/>
    <property type="project" value="InterPro"/>
</dbReference>
<dbReference type="GO" id="GO:0047498">
    <property type="term" value="F:calcium-dependent phospholipase A2 activity"/>
    <property type="evidence" value="ECO:0007669"/>
    <property type="project" value="TreeGrafter"/>
</dbReference>
<dbReference type="GO" id="GO:0005543">
    <property type="term" value="F:phospholipid binding"/>
    <property type="evidence" value="ECO:0007669"/>
    <property type="project" value="TreeGrafter"/>
</dbReference>
<dbReference type="GO" id="GO:0050482">
    <property type="term" value="P:arachidonate secretion"/>
    <property type="evidence" value="ECO:0007669"/>
    <property type="project" value="InterPro"/>
</dbReference>
<dbReference type="GO" id="GO:0016042">
    <property type="term" value="P:lipid catabolic process"/>
    <property type="evidence" value="ECO:0007669"/>
    <property type="project" value="UniProtKB-KW"/>
</dbReference>
<dbReference type="GO" id="GO:0042130">
    <property type="term" value="P:negative regulation of T cell proliferation"/>
    <property type="evidence" value="ECO:0007669"/>
    <property type="project" value="TreeGrafter"/>
</dbReference>
<dbReference type="GO" id="GO:0006644">
    <property type="term" value="P:phospholipid metabolic process"/>
    <property type="evidence" value="ECO:0007669"/>
    <property type="project" value="InterPro"/>
</dbReference>
<dbReference type="CDD" id="cd00125">
    <property type="entry name" value="PLA2c"/>
    <property type="match status" value="1"/>
</dbReference>
<dbReference type="FunFam" id="1.20.90.10:FF:000001">
    <property type="entry name" value="Basic phospholipase A2 homolog"/>
    <property type="match status" value="1"/>
</dbReference>
<dbReference type="Gene3D" id="1.20.90.10">
    <property type="entry name" value="Phospholipase A2 domain"/>
    <property type="match status" value="1"/>
</dbReference>
<dbReference type="InterPro" id="IPR001211">
    <property type="entry name" value="PLipase_A2"/>
</dbReference>
<dbReference type="InterPro" id="IPR033112">
    <property type="entry name" value="PLipase_A2_Asp_AS"/>
</dbReference>
<dbReference type="InterPro" id="IPR016090">
    <property type="entry name" value="PLipase_A2_dom"/>
</dbReference>
<dbReference type="InterPro" id="IPR036444">
    <property type="entry name" value="PLipase_A2_dom_sf"/>
</dbReference>
<dbReference type="InterPro" id="IPR033113">
    <property type="entry name" value="PLipase_A2_His_AS"/>
</dbReference>
<dbReference type="PANTHER" id="PTHR11716">
    <property type="entry name" value="PHOSPHOLIPASE A2 FAMILY MEMBER"/>
    <property type="match status" value="1"/>
</dbReference>
<dbReference type="PANTHER" id="PTHR11716:SF9">
    <property type="entry name" value="PHOSPHOLIPASE A2, MEMBRANE ASSOCIATED"/>
    <property type="match status" value="1"/>
</dbReference>
<dbReference type="Pfam" id="PF00068">
    <property type="entry name" value="Phospholip_A2_1"/>
    <property type="match status" value="1"/>
</dbReference>
<dbReference type="PRINTS" id="PR00389">
    <property type="entry name" value="PHPHLIPASEA2"/>
</dbReference>
<dbReference type="SMART" id="SM00085">
    <property type="entry name" value="PA2c"/>
    <property type="match status" value="1"/>
</dbReference>
<dbReference type="SUPFAM" id="SSF48619">
    <property type="entry name" value="Phospholipase A2, PLA2"/>
    <property type="match status" value="1"/>
</dbReference>
<dbReference type="PROSITE" id="PS00119">
    <property type="entry name" value="PA2_ASP"/>
    <property type="match status" value="1"/>
</dbReference>
<dbReference type="PROSITE" id="PS00118">
    <property type="entry name" value="PA2_HIS"/>
    <property type="match status" value="1"/>
</dbReference>
<accession>Q90ZZ9</accession>
<sequence length="138" mass="15770">MRTLWIVAVWLMSVEGNLYQFGKMIKNKTGKPAMFSYSAYGCYCGWGGQGKPQDASDRCCFVHDCCYTRVNDCSPKMTSYSYSFENRDIICGDDDSCRKAVCECDREAAICLGENVNTYDEKYRFYSSSHCVEETEQC</sequence>
<proteinExistence type="inferred from homology"/>
<organism>
    <name type="scientific">Echis coloratus</name>
    <name type="common">Carpet viper</name>
    <dbReference type="NCBI Taxonomy" id="64175"/>
    <lineage>
        <taxon>Eukaryota</taxon>
        <taxon>Metazoa</taxon>
        <taxon>Chordata</taxon>
        <taxon>Craniata</taxon>
        <taxon>Vertebrata</taxon>
        <taxon>Euteleostomi</taxon>
        <taxon>Lepidosauria</taxon>
        <taxon>Squamata</taxon>
        <taxon>Bifurcata</taxon>
        <taxon>Unidentata</taxon>
        <taxon>Episquamata</taxon>
        <taxon>Toxicofera</taxon>
        <taxon>Serpentes</taxon>
        <taxon>Colubroidea</taxon>
        <taxon>Viperidae</taxon>
        <taxon>Viperinae</taxon>
        <taxon>Echis</taxon>
    </lineage>
</organism>
<evidence type="ECO:0000250" key="1"/>
<evidence type="ECO:0000255" key="2">
    <source>
        <dbReference type="PROSITE-ProRule" id="PRU10035"/>
    </source>
</evidence>
<evidence type="ECO:0000255" key="3">
    <source>
        <dbReference type="PROSITE-ProRule" id="PRU10036"/>
    </source>
</evidence>
<evidence type="ECO:0000305" key="4"/>
<feature type="signal peptide" evidence="1">
    <location>
        <begin position="1"/>
        <end position="16"/>
    </location>
</feature>
<feature type="chain" id="PRO_0000022868" description="Phospholipase A2 EC1">
    <location>
        <begin position="17"/>
        <end position="138"/>
    </location>
</feature>
<feature type="active site" evidence="1">
    <location>
        <position position="63"/>
    </location>
</feature>
<feature type="active site" evidence="1">
    <location>
        <position position="105"/>
    </location>
</feature>
<feature type="binding site" evidence="1">
    <location>
        <position position="43"/>
    </location>
    <ligand>
        <name>Ca(2+)</name>
        <dbReference type="ChEBI" id="CHEBI:29108"/>
    </ligand>
</feature>
<feature type="binding site" evidence="1">
    <location>
        <position position="45"/>
    </location>
    <ligand>
        <name>Ca(2+)</name>
        <dbReference type="ChEBI" id="CHEBI:29108"/>
    </ligand>
</feature>
<feature type="binding site" evidence="1">
    <location>
        <position position="47"/>
    </location>
    <ligand>
        <name>Ca(2+)</name>
        <dbReference type="ChEBI" id="CHEBI:29108"/>
    </ligand>
</feature>
<feature type="binding site" evidence="1">
    <location>
        <position position="64"/>
    </location>
    <ligand>
        <name>Ca(2+)</name>
        <dbReference type="ChEBI" id="CHEBI:29108"/>
    </ligand>
</feature>
<feature type="disulfide bond" evidence="1">
    <location>
        <begin position="42"/>
        <end position="131"/>
    </location>
</feature>
<feature type="disulfide bond" evidence="1">
    <location>
        <begin position="44"/>
        <end position="60"/>
    </location>
</feature>
<feature type="disulfide bond" evidence="1">
    <location>
        <begin position="59"/>
        <end position="111"/>
    </location>
</feature>
<feature type="disulfide bond" evidence="1">
    <location>
        <begin position="65"/>
        <end position="138"/>
    </location>
</feature>
<feature type="disulfide bond" evidence="1">
    <location>
        <begin position="66"/>
        <end position="104"/>
    </location>
</feature>
<feature type="disulfide bond" evidence="1">
    <location>
        <begin position="73"/>
        <end position="97"/>
    </location>
</feature>
<feature type="disulfide bond" evidence="1">
    <location>
        <begin position="91"/>
        <end position="102"/>
    </location>
</feature>
<reference key="1">
    <citation type="submission" date="2000-04" db="EMBL/GenBank/DDBJ databases">
        <title>Evolutionary relationships of Viperidae phospholipase A2 genes inferred from intron sequences.</title>
        <authorList>
            <person name="Kordis D."/>
            <person name="Gubensek F."/>
        </authorList>
    </citation>
    <scope>NUCLEOTIDE SEQUENCE [GENOMIC DNA]</scope>
</reference>
<protein>
    <recommendedName>
        <fullName>Phospholipase A2 EC1</fullName>
        <ecNumber>3.1.1.4</ecNumber>
    </recommendedName>
    <alternativeName>
        <fullName>Phosphatidylcholine 2-acylhydrolase</fullName>
    </alternativeName>
</protein>